<dbReference type="EMBL" id="CP000826">
    <property type="protein sequence ID" value="ABV41857.1"/>
    <property type="molecule type" value="Genomic_DNA"/>
</dbReference>
<dbReference type="SMR" id="A8GFG7"/>
<dbReference type="STRING" id="399741.Spro_2756"/>
<dbReference type="KEGG" id="spe:Spro_2756"/>
<dbReference type="eggNOG" id="COG0850">
    <property type="taxonomic scope" value="Bacteria"/>
</dbReference>
<dbReference type="HOGENOM" id="CLU_067812_0_1_6"/>
<dbReference type="OrthoDB" id="9794530at2"/>
<dbReference type="GO" id="GO:0000902">
    <property type="term" value="P:cell morphogenesis"/>
    <property type="evidence" value="ECO:0007669"/>
    <property type="project" value="InterPro"/>
</dbReference>
<dbReference type="GO" id="GO:0000917">
    <property type="term" value="P:division septum assembly"/>
    <property type="evidence" value="ECO:0007669"/>
    <property type="project" value="UniProtKB-KW"/>
</dbReference>
<dbReference type="GO" id="GO:0051302">
    <property type="term" value="P:regulation of cell division"/>
    <property type="evidence" value="ECO:0007669"/>
    <property type="project" value="InterPro"/>
</dbReference>
<dbReference type="GO" id="GO:1901891">
    <property type="term" value="P:regulation of cell septum assembly"/>
    <property type="evidence" value="ECO:0007669"/>
    <property type="project" value="InterPro"/>
</dbReference>
<dbReference type="FunFam" id="2.160.20.70:FF:000002">
    <property type="entry name" value="Probable septum site-determining protein MinC"/>
    <property type="match status" value="1"/>
</dbReference>
<dbReference type="Gene3D" id="2.160.20.70">
    <property type="match status" value="1"/>
</dbReference>
<dbReference type="Gene3D" id="3.30.70.260">
    <property type="match status" value="1"/>
</dbReference>
<dbReference type="HAMAP" id="MF_00267">
    <property type="entry name" value="MinC"/>
    <property type="match status" value="1"/>
</dbReference>
<dbReference type="InterPro" id="IPR016098">
    <property type="entry name" value="CAP/MinC_C"/>
</dbReference>
<dbReference type="InterPro" id="IPR013033">
    <property type="entry name" value="MinC"/>
</dbReference>
<dbReference type="InterPro" id="IPR036145">
    <property type="entry name" value="MinC_C_sf"/>
</dbReference>
<dbReference type="InterPro" id="IPR007874">
    <property type="entry name" value="MinC_N"/>
</dbReference>
<dbReference type="InterPro" id="IPR005526">
    <property type="entry name" value="Septum_form_inhib_MinC_C"/>
</dbReference>
<dbReference type="NCBIfam" id="TIGR01222">
    <property type="entry name" value="minC"/>
    <property type="match status" value="1"/>
</dbReference>
<dbReference type="PANTHER" id="PTHR34108">
    <property type="entry name" value="SEPTUM SITE-DETERMINING PROTEIN MINC"/>
    <property type="match status" value="1"/>
</dbReference>
<dbReference type="PANTHER" id="PTHR34108:SF1">
    <property type="entry name" value="SEPTUM SITE-DETERMINING PROTEIN MINC"/>
    <property type="match status" value="1"/>
</dbReference>
<dbReference type="Pfam" id="PF03775">
    <property type="entry name" value="MinC_C"/>
    <property type="match status" value="1"/>
</dbReference>
<dbReference type="Pfam" id="PF05209">
    <property type="entry name" value="MinC_N"/>
    <property type="match status" value="1"/>
</dbReference>
<dbReference type="SUPFAM" id="SSF63848">
    <property type="entry name" value="Cell-division inhibitor MinC, C-terminal domain"/>
    <property type="match status" value="1"/>
</dbReference>
<feature type="chain" id="PRO_1000059118" description="Probable septum site-determining protein MinC">
    <location>
        <begin position="1"/>
        <end position="233"/>
    </location>
</feature>
<feature type="region of interest" description="Disordered" evidence="2">
    <location>
        <begin position="104"/>
        <end position="124"/>
    </location>
</feature>
<keyword id="KW-0131">Cell cycle</keyword>
<keyword id="KW-0132">Cell division</keyword>
<keyword id="KW-0717">Septation</keyword>
<comment type="function">
    <text evidence="1">Cell division inhibitor that blocks the formation of polar Z ring septums. Rapidly oscillates between the poles of the cell to destabilize FtsZ filaments that have formed before they mature into polar Z rings. Prevents FtsZ polymerization.</text>
</comment>
<comment type="subunit">
    <text evidence="1">Interacts with MinD and FtsZ.</text>
</comment>
<comment type="similarity">
    <text evidence="1">Belongs to the MinC family.</text>
</comment>
<gene>
    <name evidence="1" type="primary">minC</name>
    <name type="ordered locus">Spro_2756</name>
</gene>
<reference key="1">
    <citation type="submission" date="2007-09" db="EMBL/GenBank/DDBJ databases">
        <title>Complete sequence of chromosome of Serratia proteamaculans 568.</title>
        <authorList>
            <consortium name="US DOE Joint Genome Institute"/>
            <person name="Copeland A."/>
            <person name="Lucas S."/>
            <person name="Lapidus A."/>
            <person name="Barry K."/>
            <person name="Glavina del Rio T."/>
            <person name="Dalin E."/>
            <person name="Tice H."/>
            <person name="Pitluck S."/>
            <person name="Chain P."/>
            <person name="Malfatti S."/>
            <person name="Shin M."/>
            <person name="Vergez L."/>
            <person name="Schmutz J."/>
            <person name="Larimer F."/>
            <person name="Land M."/>
            <person name="Hauser L."/>
            <person name="Kyrpides N."/>
            <person name="Kim E."/>
            <person name="Taghavi S."/>
            <person name="Newman L."/>
            <person name="Vangronsveld J."/>
            <person name="van der Lelie D."/>
            <person name="Richardson P."/>
        </authorList>
    </citation>
    <scope>NUCLEOTIDE SEQUENCE [LARGE SCALE GENOMIC DNA]</scope>
    <source>
        <strain>568</strain>
    </source>
</reference>
<sequence>MSQSPIELKGSSFTLSVVHLYNSEPEVIRQALQEKVEQAPAFLKNAPVVINVATLNGDANWKELQQAVTAAGLRVVGISGCRDERQKRAIARAGLPLLNEGKGQKMATPEPAPAPAPVVDPNAPAKTRIISTPVRSGQQIYARNSDLIVTSSVSAGAELIADGNIHVYGMMRGRALAGASGDTQCQIFCTHLGAELVSIAGQYWLSDQIPSDFVGQAVRLSLLDNALTIQPLN</sequence>
<accession>A8GFG7</accession>
<organism>
    <name type="scientific">Serratia proteamaculans (strain 568)</name>
    <dbReference type="NCBI Taxonomy" id="399741"/>
    <lineage>
        <taxon>Bacteria</taxon>
        <taxon>Pseudomonadati</taxon>
        <taxon>Pseudomonadota</taxon>
        <taxon>Gammaproteobacteria</taxon>
        <taxon>Enterobacterales</taxon>
        <taxon>Yersiniaceae</taxon>
        <taxon>Serratia</taxon>
    </lineage>
</organism>
<name>MINC_SERP5</name>
<protein>
    <recommendedName>
        <fullName evidence="1">Probable septum site-determining protein MinC</fullName>
    </recommendedName>
</protein>
<evidence type="ECO:0000255" key="1">
    <source>
        <dbReference type="HAMAP-Rule" id="MF_00267"/>
    </source>
</evidence>
<evidence type="ECO:0000256" key="2">
    <source>
        <dbReference type="SAM" id="MobiDB-lite"/>
    </source>
</evidence>
<proteinExistence type="inferred from homology"/>